<sequence>MARYLGPKAKLARREGTDLFLKSARRALSDKCKLDTKPGQHGRTSGSRTSDYGNQLREKQKVKRIYGVLERQFRRYFAEAERRKGNTGETLLQLLESRLDNVVYRMGFGSTRAEARQLVSHCAILLNGSPVNIPSIQVKPGDVVAIREKAKKQARITESLNLVGQMAAVTWVSVDAAKLEGTFKQVPDREDISGEINESLIVELYSR</sequence>
<accession>A4SUY5</accession>
<protein>
    <recommendedName>
        <fullName evidence="1">Small ribosomal subunit protein uS4</fullName>
    </recommendedName>
    <alternativeName>
        <fullName evidence="3">30S ribosomal protein S4</fullName>
    </alternativeName>
</protein>
<gene>
    <name evidence="1" type="primary">rpsD</name>
    <name type="ordered locus">Pnuc_0077</name>
</gene>
<evidence type="ECO:0000255" key="1">
    <source>
        <dbReference type="HAMAP-Rule" id="MF_01306"/>
    </source>
</evidence>
<evidence type="ECO:0000256" key="2">
    <source>
        <dbReference type="SAM" id="MobiDB-lite"/>
    </source>
</evidence>
<evidence type="ECO:0000305" key="3"/>
<dbReference type="EMBL" id="CP000655">
    <property type="protein sequence ID" value="ABP33299.1"/>
    <property type="molecule type" value="Genomic_DNA"/>
</dbReference>
<dbReference type="RefSeq" id="WP_011901924.1">
    <property type="nucleotide sequence ID" value="NC_009379.1"/>
</dbReference>
<dbReference type="SMR" id="A4SUY5"/>
<dbReference type="GeneID" id="31480424"/>
<dbReference type="KEGG" id="pnu:Pnuc_0077"/>
<dbReference type="eggNOG" id="COG0522">
    <property type="taxonomic scope" value="Bacteria"/>
</dbReference>
<dbReference type="HOGENOM" id="CLU_092403_0_2_4"/>
<dbReference type="Proteomes" id="UP000000231">
    <property type="component" value="Chromosome"/>
</dbReference>
<dbReference type="GO" id="GO:0015935">
    <property type="term" value="C:small ribosomal subunit"/>
    <property type="evidence" value="ECO:0007669"/>
    <property type="project" value="InterPro"/>
</dbReference>
<dbReference type="GO" id="GO:0019843">
    <property type="term" value="F:rRNA binding"/>
    <property type="evidence" value="ECO:0007669"/>
    <property type="project" value="UniProtKB-UniRule"/>
</dbReference>
<dbReference type="GO" id="GO:0003735">
    <property type="term" value="F:structural constituent of ribosome"/>
    <property type="evidence" value="ECO:0007669"/>
    <property type="project" value="InterPro"/>
</dbReference>
<dbReference type="GO" id="GO:0042274">
    <property type="term" value="P:ribosomal small subunit biogenesis"/>
    <property type="evidence" value="ECO:0007669"/>
    <property type="project" value="TreeGrafter"/>
</dbReference>
<dbReference type="GO" id="GO:0006412">
    <property type="term" value="P:translation"/>
    <property type="evidence" value="ECO:0007669"/>
    <property type="project" value="UniProtKB-UniRule"/>
</dbReference>
<dbReference type="CDD" id="cd00165">
    <property type="entry name" value="S4"/>
    <property type="match status" value="1"/>
</dbReference>
<dbReference type="FunFam" id="1.10.1050.10:FF:000001">
    <property type="entry name" value="30S ribosomal protein S4"/>
    <property type="match status" value="1"/>
</dbReference>
<dbReference type="FunFam" id="3.10.290.10:FF:000001">
    <property type="entry name" value="30S ribosomal protein S4"/>
    <property type="match status" value="1"/>
</dbReference>
<dbReference type="Gene3D" id="1.10.1050.10">
    <property type="entry name" value="Ribosomal Protein S4 Delta 41, Chain A, domain 1"/>
    <property type="match status" value="1"/>
</dbReference>
<dbReference type="Gene3D" id="3.10.290.10">
    <property type="entry name" value="RNA-binding S4 domain"/>
    <property type="match status" value="1"/>
</dbReference>
<dbReference type="HAMAP" id="MF_01306_B">
    <property type="entry name" value="Ribosomal_uS4_B"/>
    <property type="match status" value="1"/>
</dbReference>
<dbReference type="InterPro" id="IPR022801">
    <property type="entry name" value="Ribosomal_uS4"/>
</dbReference>
<dbReference type="InterPro" id="IPR005709">
    <property type="entry name" value="Ribosomal_uS4_bac-type"/>
</dbReference>
<dbReference type="InterPro" id="IPR018079">
    <property type="entry name" value="Ribosomal_uS4_CS"/>
</dbReference>
<dbReference type="InterPro" id="IPR001912">
    <property type="entry name" value="Ribosomal_uS4_N"/>
</dbReference>
<dbReference type="InterPro" id="IPR002942">
    <property type="entry name" value="S4_RNA-bd"/>
</dbReference>
<dbReference type="InterPro" id="IPR036986">
    <property type="entry name" value="S4_RNA-bd_sf"/>
</dbReference>
<dbReference type="NCBIfam" id="NF003717">
    <property type="entry name" value="PRK05327.1"/>
    <property type="match status" value="1"/>
</dbReference>
<dbReference type="NCBIfam" id="TIGR01017">
    <property type="entry name" value="rpsD_bact"/>
    <property type="match status" value="1"/>
</dbReference>
<dbReference type="PANTHER" id="PTHR11831">
    <property type="entry name" value="30S 40S RIBOSOMAL PROTEIN"/>
    <property type="match status" value="1"/>
</dbReference>
<dbReference type="PANTHER" id="PTHR11831:SF4">
    <property type="entry name" value="SMALL RIBOSOMAL SUBUNIT PROTEIN US4M"/>
    <property type="match status" value="1"/>
</dbReference>
<dbReference type="Pfam" id="PF00163">
    <property type="entry name" value="Ribosomal_S4"/>
    <property type="match status" value="1"/>
</dbReference>
<dbReference type="Pfam" id="PF01479">
    <property type="entry name" value="S4"/>
    <property type="match status" value="1"/>
</dbReference>
<dbReference type="SMART" id="SM01390">
    <property type="entry name" value="Ribosomal_S4"/>
    <property type="match status" value="1"/>
</dbReference>
<dbReference type="SMART" id="SM00363">
    <property type="entry name" value="S4"/>
    <property type="match status" value="1"/>
</dbReference>
<dbReference type="SUPFAM" id="SSF55174">
    <property type="entry name" value="Alpha-L RNA-binding motif"/>
    <property type="match status" value="1"/>
</dbReference>
<dbReference type="PROSITE" id="PS00632">
    <property type="entry name" value="RIBOSOMAL_S4"/>
    <property type="match status" value="1"/>
</dbReference>
<dbReference type="PROSITE" id="PS50889">
    <property type="entry name" value="S4"/>
    <property type="match status" value="1"/>
</dbReference>
<proteinExistence type="inferred from homology"/>
<name>RS4_POLAQ</name>
<organism>
    <name type="scientific">Polynucleobacter asymbioticus (strain DSM 18221 / CIP 109841 / QLW-P1DMWA-1)</name>
    <name type="common">Polynucleobacter necessarius subsp. asymbioticus</name>
    <dbReference type="NCBI Taxonomy" id="312153"/>
    <lineage>
        <taxon>Bacteria</taxon>
        <taxon>Pseudomonadati</taxon>
        <taxon>Pseudomonadota</taxon>
        <taxon>Betaproteobacteria</taxon>
        <taxon>Burkholderiales</taxon>
        <taxon>Burkholderiaceae</taxon>
        <taxon>Polynucleobacter</taxon>
    </lineage>
</organism>
<keyword id="KW-1185">Reference proteome</keyword>
<keyword id="KW-0687">Ribonucleoprotein</keyword>
<keyword id="KW-0689">Ribosomal protein</keyword>
<keyword id="KW-0694">RNA-binding</keyword>
<keyword id="KW-0699">rRNA-binding</keyword>
<reference key="1">
    <citation type="journal article" date="2012" name="Stand. Genomic Sci.">
        <title>Complete genome sequence of Polynucleobacter necessarius subsp. asymbioticus type strain (QLW-P1DMWA-1(T)).</title>
        <authorList>
            <person name="Meincke L."/>
            <person name="Copeland A."/>
            <person name="Lapidus A."/>
            <person name="Lucas S."/>
            <person name="Berry K.W."/>
            <person name="Del Rio T.G."/>
            <person name="Hammon N."/>
            <person name="Dalin E."/>
            <person name="Tice H."/>
            <person name="Pitluck S."/>
            <person name="Richardson P."/>
            <person name="Bruce D."/>
            <person name="Goodwin L."/>
            <person name="Han C."/>
            <person name="Tapia R."/>
            <person name="Detter J.C."/>
            <person name="Schmutz J."/>
            <person name="Brettin T."/>
            <person name="Larimer F."/>
            <person name="Land M."/>
            <person name="Hauser L."/>
            <person name="Kyrpides N.C."/>
            <person name="Ivanova N."/>
            <person name="Goker M."/>
            <person name="Woyke T."/>
            <person name="Wu Q.L."/>
            <person name="Pockl M."/>
            <person name="Hahn M.W."/>
            <person name="Klenk H.P."/>
        </authorList>
    </citation>
    <scope>NUCLEOTIDE SEQUENCE [LARGE SCALE GENOMIC DNA]</scope>
    <source>
        <strain>DSM 18221 / CIP 109841 / QLW-P1DMWA-1</strain>
    </source>
</reference>
<comment type="function">
    <text evidence="1">One of the primary rRNA binding proteins, it binds directly to 16S rRNA where it nucleates assembly of the body of the 30S subunit.</text>
</comment>
<comment type="function">
    <text evidence="1">With S5 and S12 plays an important role in translational accuracy.</text>
</comment>
<comment type="subunit">
    <text evidence="1">Part of the 30S ribosomal subunit. Contacts protein S5. The interaction surface between S4 and S5 is involved in control of translational fidelity.</text>
</comment>
<comment type="similarity">
    <text evidence="1">Belongs to the universal ribosomal protein uS4 family.</text>
</comment>
<feature type="chain" id="PRO_1000085984" description="Small ribosomal subunit protein uS4">
    <location>
        <begin position="1"/>
        <end position="207"/>
    </location>
</feature>
<feature type="domain" description="S4 RNA-binding" evidence="1">
    <location>
        <begin position="97"/>
        <end position="158"/>
    </location>
</feature>
<feature type="region of interest" description="Disordered" evidence="2">
    <location>
        <begin position="31"/>
        <end position="54"/>
    </location>
</feature>
<feature type="compositionally biased region" description="Polar residues" evidence="2">
    <location>
        <begin position="42"/>
        <end position="53"/>
    </location>
</feature>